<keyword id="KW-0217">Developmental protein</keyword>
<keyword id="KW-0449">Lipoprotein</keyword>
<keyword id="KW-0519">Myristate</keyword>
<keyword id="KW-0539">Nucleus</keyword>
<keyword id="KW-1185">Reference proteome</keyword>
<feature type="initiator methionine" description="Removed" evidence="1">
    <location>
        <position position="1"/>
    </location>
</feature>
<feature type="chain" id="PRO_0000449316" description="Protein PSK SIMULATOR 3">
    <location>
        <begin position="2"/>
        <end position="649"/>
    </location>
</feature>
<feature type="region of interest" description="Disordered" evidence="2">
    <location>
        <begin position="18"/>
        <end position="43"/>
    </location>
</feature>
<feature type="lipid moiety-binding region" description="N-myristoyl glycine" evidence="1">
    <location>
        <position position="2"/>
    </location>
</feature>
<sequence length="649" mass="72498">MGSFCSKSLGINFGSEYSGSSVADDGREPDFGHSQPNGQTSLIVPGMRQLMVKDVKEQNQLKDVFSFREREAEDNFYDGIPTYTMAPSQKIRSAKSTQTAVSKVTEASKLLGKAGLGRAKDVLDTLGSSMTDLSSGGFTSGVATKGNELGILAFEVANTIVKSSNLIESLSKRNIEHLKGTILYSEGVQNLVSNDFDELLRLVAADKRQELQVFSGEVVRFGNRSKDFQWHNLQRYFDRISKELTPQRQLKEDAVLVVDQLMVLVQYTAELYQELQVLYRLEKDYEQKRREEENSANSSKGDGLAILKTELKAQRKVVKSLKKKSLWSRGFEEVMEKLVDIVHFLLLEIHNIFGGADDQPSKKGAAEYDKRLGPAGLALHYANIIVQIDTLVARASSITSNARDSLYQSLPPGIKLALRSKIKSFNVDKELSVTQIKDEMERTLHWLVPVAGNTTKAHHGFGWVGEWANTGTDFTSKPSGGDILRIETLYHASKEKTEIYILGQIIWLQHLVTKAKSDARGGPRLSSIKSPLDTTNQQLISEPLSVPIVTDEEQKMLQEASKRKRTPCVSKSQDFDSEYSRARKCDPLSKSSEYFRGVRRSKSAAVKRYSSGFPLLDFAIDKEKVLDVIDRVDVPRDYKALLKEGSLSF</sequence>
<proteinExistence type="evidence at protein level"/>
<accession>P0DO24</accession>
<accession>A0A178UKE1</accession>
<accession>Q9C5B1</accession>
<gene>
    <name evidence="4" type="primary">PSI3</name>
    <name evidence="5" type="ordered locus">At5g08660</name>
    <name evidence="6" type="ORF">T2K12</name>
</gene>
<name>PSI3_ARATH</name>
<organism>
    <name type="scientific">Arabidopsis thaliana</name>
    <name type="common">Mouse-ear cress</name>
    <dbReference type="NCBI Taxonomy" id="3702"/>
    <lineage>
        <taxon>Eukaryota</taxon>
        <taxon>Viridiplantae</taxon>
        <taxon>Streptophyta</taxon>
        <taxon>Embryophyta</taxon>
        <taxon>Tracheophyta</taxon>
        <taxon>Spermatophyta</taxon>
        <taxon>Magnoliopsida</taxon>
        <taxon>eudicotyledons</taxon>
        <taxon>Gunneridae</taxon>
        <taxon>Pentapetalae</taxon>
        <taxon>rosids</taxon>
        <taxon>malvids</taxon>
        <taxon>Brassicales</taxon>
        <taxon>Brassicaceae</taxon>
        <taxon>Camelineae</taxon>
        <taxon>Arabidopsis</taxon>
    </lineage>
</organism>
<protein>
    <recommendedName>
        <fullName evidence="4">Protein PSK SIMULATOR 3</fullName>
        <shortName evidence="4">AtPSI3</shortName>
    </recommendedName>
</protein>
<evidence type="ECO:0000255" key="1"/>
<evidence type="ECO:0000256" key="2">
    <source>
        <dbReference type="SAM" id="MobiDB-lite"/>
    </source>
</evidence>
<evidence type="ECO:0000269" key="3">
    <source>
    </source>
</evidence>
<evidence type="ECO:0000303" key="4">
    <source>
    </source>
</evidence>
<evidence type="ECO:0000312" key="5">
    <source>
        <dbReference type="Araport" id="AT5G08660"/>
    </source>
</evidence>
<evidence type="ECO:0000312" key="6">
    <source>
        <dbReference type="EMBL" id="CAC35871.1"/>
    </source>
</evidence>
<dbReference type="EMBL" id="AL590346">
    <property type="protein sequence ID" value="CAC35871.1"/>
    <property type="molecule type" value="Genomic_DNA"/>
</dbReference>
<dbReference type="EMBL" id="CP002688">
    <property type="protein sequence ID" value="AED91335.1"/>
    <property type="molecule type" value="Genomic_DNA"/>
</dbReference>
<dbReference type="EMBL" id="CP002688">
    <property type="protein sequence ID" value="ANM69947.1"/>
    <property type="molecule type" value="Genomic_DNA"/>
</dbReference>
<dbReference type="EMBL" id="CP002688">
    <property type="protein sequence ID" value="ANM69948.1"/>
    <property type="molecule type" value="Genomic_DNA"/>
</dbReference>
<dbReference type="RefSeq" id="NP_001331591.1">
    <property type="nucleotide sequence ID" value="NM_001343028.1"/>
</dbReference>
<dbReference type="RefSeq" id="NP_001331592.1">
    <property type="nucleotide sequence ID" value="NM_001343029.1"/>
</dbReference>
<dbReference type="RefSeq" id="NP_680154.2">
    <property type="nucleotide sequence ID" value="NM_147849.4"/>
</dbReference>
<dbReference type="SMR" id="P0DO24"/>
<dbReference type="FunCoup" id="P0DO24">
    <property type="interactions" value="37"/>
</dbReference>
<dbReference type="STRING" id="3702.Q9C5B1"/>
<dbReference type="iPTMnet" id="P0DO24"/>
<dbReference type="PaxDb" id="3702-AT5G08660.1"/>
<dbReference type="ProteomicsDB" id="189278"/>
<dbReference type="EnsemblPlants" id="AT5G08660.1">
    <property type="protein sequence ID" value="AT5G08660.1"/>
    <property type="gene ID" value="AT5G08660"/>
</dbReference>
<dbReference type="EnsemblPlants" id="AT5G08660.3">
    <property type="protein sequence ID" value="AT5G08660.3"/>
    <property type="gene ID" value="AT5G08660"/>
</dbReference>
<dbReference type="EnsemblPlants" id="AT5G08660.4">
    <property type="protein sequence ID" value="AT5G08660.4"/>
    <property type="gene ID" value="AT5G08660"/>
</dbReference>
<dbReference type="GeneID" id="830767"/>
<dbReference type="Gramene" id="AT5G08660.1">
    <property type="protein sequence ID" value="AT5G08660.1"/>
    <property type="gene ID" value="AT5G08660"/>
</dbReference>
<dbReference type="Gramene" id="AT5G08660.3">
    <property type="protein sequence ID" value="AT5G08660.3"/>
    <property type="gene ID" value="AT5G08660"/>
</dbReference>
<dbReference type="Gramene" id="AT5G08660.4">
    <property type="protein sequence ID" value="AT5G08660.4"/>
    <property type="gene ID" value="AT5G08660"/>
</dbReference>
<dbReference type="KEGG" id="ath:AT5G08660"/>
<dbReference type="Araport" id="AT5G08660"/>
<dbReference type="TAIR" id="AT5G08660">
    <property type="gene designation" value="PSI3"/>
</dbReference>
<dbReference type="eggNOG" id="ENOG502QQVZ">
    <property type="taxonomic scope" value="Eukaryota"/>
</dbReference>
<dbReference type="HOGENOM" id="CLU_022639_0_0_1"/>
<dbReference type="InParanoid" id="P0DO24"/>
<dbReference type="OrthoDB" id="2020544at2759"/>
<dbReference type="PRO" id="PR:P0DO24"/>
<dbReference type="Proteomes" id="UP000006548">
    <property type="component" value="Chromosome 5"/>
</dbReference>
<dbReference type="ExpressionAtlas" id="P0DO24">
    <property type="expression patterns" value="baseline and differential"/>
</dbReference>
<dbReference type="GO" id="GO:0005739">
    <property type="term" value="C:mitochondrion"/>
    <property type="evidence" value="ECO:0007005"/>
    <property type="project" value="TAIR"/>
</dbReference>
<dbReference type="GO" id="GO:0005634">
    <property type="term" value="C:nucleus"/>
    <property type="evidence" value="ECO:0000314"/>
    <property type="project" value="UniProtKB"/>
</dbReference>
<dbReference type="GO" id="GO:0005886">
    <property type="term" value="C:plasma membrane"/>
    <property type="evidence" value="ECO:0007005"/>
    <property type="project" value="TAIR"/>
</dbReference>
<dbReference type="GO" id="GO:0045927">
    <property type="term" value="P:positive regulation of growth"/>
    <property type="evidence" value="ECO:0000315"/>
    <property type="project" value="UniProtKB"/>
</dbReference>
<dbReference type="GO" id="GO:0006109">
    <property type="term" value="P:regulation of carbohydrate metabolic process"/>
    <property type="evidence" value="ECO:0000315"/>
    <property type="project" value="UniProtKB"/>
</dbReference>
<dbReference type="GO" id="GO:0043434">
    <property type="term" value="P:response to peptide hormone"/>
    <property type="evidence" value="ECO:0000315"/>
    <property type="project" value="UniProtKB"/>
</dbReference>
<dbReference type="GO" id="GO:0009744">
    <property type="term" value="P:response to sucrose"/>
    <property type="evidence" value="ECO:0000270"/>
    <property type="project" value="UniProtKB"/>
</dbReference>
<dbReference type="InterPro" id="IPR021864">
    <property type="entry name" value="DUF3475"/>
</dbReference>
<dbReference type="InterPro" id="IPR007700">
    <property type="entry name" value="DUF668"/>
</dbReference>
<dbReference type="InterPro" id="IPR045021">
    <property type="entry name" value="PSI1/2/3"/>
</dbReference>
<dbReference type="PANTHER" id="PTHR31730">
    <property type="entry name" value="OS01G0873900 PROTEIN"/>
    <property type="match status" value="1"/>
</dbReference>
<dbReference type="PANTHER" id="PTHR31730:SF2">
    <property type="entry name" value="PROTEIN PSK SIMULATOR 3"/>
    <property type="match status" value="1"/>
</dbReference>
<dbReference type="Pfam" id="PF11961">
    <property type="entry name" value="DUF3475"/>
    <property type="match status" value="1"/>
</dbReference>
<dbReference type="Pfam" id="PF05003">
    <property type="entry name" value="DUF668"/>
    <property type="match status" value="1"/>
</dbReference>
<reference key="1">
    <citation type="journal article" date="2000" name="Nature">
        <title>Sequence and analysis of chromosome 5 of the plant Arabidopsis thaliana.</title>
        <authorList>
            <person name="Tabata S."/>
            <person name="Kaneko T."/>
            <person name="Nakamura Y."/>
            <person name="Kotani H."/>
            <person name="Kato T."/>
            <person name="Asamizu E."/>
            <person name="Miyajima N."/>
            <person name="Sasamoto S."/>
            <person name="Kimura T."/>
            <person name="Hosouchi T."/>
            <person name="Kawashima K."/>
            <person name="Kohara M."/>
            <person name="Matsumoto M."/>
            <person name="Matsuno A."/>
            <person name="Muraki A."/>
            <person name="Nakayama S."/>
            <person name="Nakazaki N."/>
            <person name="Naruo K."/>
            <person name="Okumura S."/>
            <person name="Shinpo S."/>
            <person name="Takeuchi C."/>
            <person name="Wada T."/>
            <person name="Watanabe A."/>
            <person name="Yamada M."/>
            <person name="Yasuda M."/>
            <person name="Sato S."/>
            <person name="de la Bastide M."/>
            <person name="Huang E."/>
            <person name="Spiegel L."/>
            <person name="Gnoj L."/>
            <person name="O'Shaughnessy A."/>
            <person name="Preston R."/>
            <person name="Habermann K."/>
            <person name="Murray J."/>
            <person name="Johnson D."/>
            <person name="Rohlfing T."/>
            <person name="Nelson J."/>
            <person name="Stoneking T."/>
            <person name="Pepin K."/>
            <person name="Spieth J."/>
            <person name="Sekhon M."/>
            <person name="Armstrong J."/>
            <person name="Becker M."/>
            <person name="Belter E."/>
            <person name="Cordum H."/>
            <person name="Cordes M."/>
            <person name="Courtney L."/>
            <person name="Courtney W."/>
            <person name="Dante M."/>
            <person name="Du H."/>
            <person name="Edwards J."/>
            <person name="Fryman J."/>
            <person name="Haakensen B."/>
            <person name="Lamar E."/>
            <person name="Latreille P."/>
            <person name="Leonard S."/>
            <person name="Meyer R."/>
            <person name="Mulvaney E."/>
            <person name="Ozersky P."/>
            <person name="Riley A."/>
            <person name="Strowmatt C."/>
            <person name="Wagner-McPherson C."/>
            <person name="Wollam A."/>
            <person name="Yoakum M."/>
            <person name="Bell M."/>
            <person name="Dedhia N."/>
            <person name="Parnell L."/>
            <person name="Shah R."/>
            <person name="Rodriguez M."/>
            <person name="Hoon See L."/>
            <person name="Vil D."/>
            <person name="Baker J."/>
            <person name="Kirchoff K."/>
            <person name="Toth K."/>
            <person name="King L."/>
            <person name="Bahret A."/>
            <person name="Miller B."/>
            <person name="Marra M.A."/>
            <person name="Martienssen R."/>
            <person name="McCombie W.R."/>
            <person name="Wilson R.K."/>
            <person name="Murphy G."/>
            <person name="Bancroft I."/>
            <person name="Volckaert G."/>
            <person name="Wambutt R."/>
            <person name="Duesterhoeft A."/>
            <person name="Stiekema W."/>
            <person name="Pohl T."/>
            <person name="Entian K.-D."/>
            <person name="Terryn N."/>
            <person name="Hartley N."/>
            <person name="Bent E."/>
            <person name="Johnson S."/>
            <person name="Langham S.-A."/>
            <person name="McCullagh B."/>
            <person name="Robben J."/>
            <person name="Grymonprez B."/>
            <person name="Zimmermann W."/>
            <person name="Ramsperger U."/>
            <person name="Wedler H."/>
            <person name="Balke K."/>
            <person name="Wedler E."/>
            <person name="Peters S."/>
            <person name="van Staveren M."/>
            <person name="Dirkse W."/>
            <person name="Mooijman P."/>
            <person name="Klein Lankhorst R."/>
            <person name="Weitzenegger T."/>
            <person name="Bothe G."/>
            <person name="Rose M."/>
            <person name="Hauf J."/>
            <person name="Berneiser S."/>
            <person name="Hempel S."/>
            <person name="Feldpausch M."/>
            <person name="Lamberth S."/>
            <person name="Villarroel R."/>
            <person name="Gielen J."/>
            <person name="Ardiles W."/>
            <person name="Bents O."/>
            <person name="Lemcke K."/>
            <person name="Kolesov G."/>
            <person name="Mayer K.F.X."/>
            <person name="Rudd S."/>
            <person name="Schoof H."/>
            <person name="Schueller C."/>
            <person name="Zaccaria P."/>
            <person name="Mewes H.-W."/>
            <person name="Bevan M."/>
            <person name="Fransz P.F."/>
        </authorList>
    </citation>
    <scope>NUCLEOTIDE SEQUENCE [LARGE SCALE GENOMIC DNA]</scope>
    <source>
        <strain>cv. Columbia</strain>
    </source>
</reference>
<reference key="2">
    <citation type="journal article" date="2017" name="Plant J.">
        <title>Araport11: a complete reannotation of the Arabidopsis thaliana reference genome.</title>
        <authorList>
            <person name="Cheng C.Y."/>
            <person name="Krishnakumar V."/>
            <person name="Chan A.P."/>
            <person name="Thibaud-Nissen F."/>
            <person name="Schobel S."/>
            <person name="Town C.D."/>
        </authorList>
    </citation>
    <scope>GENOME REANNOTATION</scope>
    <source>
        <strain>cv. Columbia</strain>
    </source>
</reference>
<reference key="3">
    <citation type="journal article" date="2009" name="Plant Physiol.">
        <title>Large-scale Arabidopsis phosphoproteome profiling reveals novel chloroplast kinase substrates and phosphorylation networks.</title>
        <authorList>
            <person name="Reiland S."/>
            <person name="Messerli G."/>
            <person name="Baerenfaller K."/>
            <person name="Gerrits B."/>
            <person name="Endler A."/>
            <person name="Grossmann J."/>
            <person name="Gruissem W."/>
            <person name="Baginsky S."/>
        </authorList>
    </citation>
    <scope>IDENTIFICATION BY MASS SPECTROMETRY [LARGE SCALE ANALYSIS]</scope>
</reference>
<reference key="4">
    <citation type="journal article" date="2014" name="Plant Mol. Biol.">
        <title>The PSI family of nuclear proteins is required for growth in arabidopsis.</title>
        <authorList>
            <person name="Stuehrwohldt N."/>
            <person name="Hartmann J."/>
            <person name="Dahlke R.I."/>
            <person name="Oecking C."/>
            <person name="Sauter M."/>
        </authorList>
    </citation>
    <scope>FUNCTION</scope>
    <scope>DISRUPTION PHENOTYPE</scope>
    <scope>SUBCELLULAR LOCATION</scope>
    <scope>INDUCTION BY SUCROSE</scope>
    <source>
        <strain>cv. Columbia</strain>
    </source>
</reference>
<comment type="function">
    <text evidence="3">Promotes plant growth, especially at the vegetative stage, probably via the regulation of phytosulfokine (PSK) signaling; PSK are peptide phytohormones acting as growth factors (PubMed:25062973). Together with PSI2 and PSI3, required during vegetative growth and reproduction (PubMed:25062973). May also have a function in carbohydrate metabolism (PubMed:25062973).</text>
</comment>
<comment type="subcellular location">
    <subcellularLocation>
        <location evidence="3">Nucleus</location>
    </subcellularLocation>
</comment>
<comment type="induction">
    <text evidence="3">By sucrose.</text>
</comment>
<comment type="disruption phenotype">
    <text evidence="3">Reduced response to phytosulfokine (PSK) in roots (PubMed:25062973). Small rosettes and dwarf plants as well as early senescence of older leaves (PubMed:25062973). Reduced fertility, premature senescence and severe dwarfism in psi2-1 psi3-1 plants due to reduced cell growth and proliferation as well as premature leaf growth arrest (PubMed:25062973). Plants missing both PSI1 and PSI3 are dwarf and contain reduced starch levels; these phenotypes are partially rescued by sucrose (PubMed:25062973).</text>
</comment>